<dbReference type="EC" id="4.2.1.9" evidence="1"/>
<dbReference type="EMBL" id="AE016795">
    <property type="protein sequence ID" value="AAO09517.1"/>
    <property type="molecule type" value="Genomic_DNA"/>
</dbReference>
<dbReference type="RefSeq" id="WP_011079063.1">
    <property type="nucleotide sequence ID" value="NC_004459.3"/>
</dbReference>
<dbReference type="SMR" id="Q8DDG1"/>
<dbReference type="KEGG" id="vvu:VV1_1029"/>
<dbReference type="HOGENOM" id="CLU_014271_4_2_6"/>
<dbReference type="UniPathway" id="UPA00047">
    <property type="reaction ID" value="UER00057"/>
</dbReference>
<dbReference type="UniPathway" id="UPA00049">
    <property type="reaction ID" value="UER00061"/>
</dbReference>
<dbReference type="Proteomes" id="UP000002275">
    <property type="component" value="Chromosome 1"/>
</dbReference>
<dbReference type="GO" id="GO:0005829">
    <property type="term" value="C:cytosol"/>
    <property type="evidence" value="ECO:0007669"/>
    <property type="project" value="TreeGrafter"/>
</dbReference>
<dbReference type="GO" id="GO:0051537">
    <property type="term" value="F:2 iron, 2 sulfur cluster binding"/>
    <property type="evidence" value="ECO:0007669"/>
    <property type="project" value="UniProtKB-UniRule"/>
</dbReference>
<dbReference type="GO" id="GO:0004160">
    <property type="term" value="F:dihydroxy-acid dehydratase activity"/>
    <property type="evidence" value="ECO:0007669"/>
    <property type="project" value="UniProtKB-UniRule"/>
</dbReference>
<dbReference type="GO" id="GO:0000287">
    <property type="term" value="F:magnesium ion binding"/>
    <property type="evidence" value="ECO:0007669"/>
    <property type="project" value="UniProtKB-UniRule"/>
</dbReference>
<dbReference type="GO" id="GO:0009097">
    <property type="term" value="P:isoleucine biosynthetic process"/>
    <property type="evidence" value="ECO:0007669"/>
    <property type="project" value="UniProtKB-UniRule"/>
</dbReference>
<dbReference type="GO" id="GO:0009099">
    <property type="term" value="P:L-valine biosynthetic process"/>
    <property type="evidence" value="ECO:0007669"/>
    <property type="project" value="UniProtKB-UniRule"/>
</dbReference>
<dbReference type="FunFam" id="3.50.30.80:FF:000001">
    <property type="entry name" value="Dihydroxy-acid dehydratase"/>
    <property type="match status" value="1"/>
</dbReference>
<dbReference type="Gene3D" id="3.50.30.80">
    <property type="entry name" value="IlvD/EDD C-terminal domain-like"/>
    <property type="match status" value="1"/>
</dbReference>
<dbReference type="HAMAP" id="MF_00012">
    <property type="entry name" value="IlvD"/>
    <property type="match status" value="1"/>
</dbReference>
<dbReference type="InterPro" id="IPR042096">
    <property type="entry name" value="Dihydro-acid_dehy_C"/>
</dbReference>
<dbReference type="InterPro" id="IPR004404">
    <property type="entry name" value="DihydroxyA_deHydtase"/>
</dbReference>
<dbReference type="InterPro" id="IPR020558">
    <property type="entry name" value="DiOHA_6PGluconate_deHydtase_CS"/>
</dbReference>
<dbReference type="InterPro" id="IPR056740">
    <property type="entry name" value="ILV_EDD_C"/>
</dbReference>
<dbReference type="InterPro" id="IPR000581">
    <property type="entry name" value="ILV_EDD_N"/>
</dbReference>
<dbReference type="InterPro" id="IPR037237">
    <property type="entry name" value="IlvD/EDD_N"/>
</dbReference>
<dbReference type="NCBIfam" id="TIGR00110">
    <property type="entry name" value="ilvD"/>
    <property type="match status" value="1"/>
</dbReference>
<dbReference type="NCBIfam" id="NF009103">
    <property type="entry name" value="PRK12448.1"/>
    <property type="match status" value="1"/>
</dbReference>
<dbReference type="PANTHER" id="PTHR43661">
    <property type="entry name" value="D-XYLONATE DEHYDRATASE"/>
    <property type="match status" value="1"/>
</dbReference>
<dbReference type="PANTHER" id="PTHR43661:SF3">
    <property type="entry name" value="D-XYLONATE DEHYDRATASE YAGF-RELATED"/>
    <property type="match status" value="1"/>
</dbReference>
<dbReference type="Pfam" id="PF24877">
    <property type="entry name" value="ILV_EDD_C"/>
    <property type="match status" value="1"/>
</dbReference>
<dbReference type="Pfam" id="PF00920">
    <property type="entry name" value="ILVD_EDD_N"/>
    <property type="match status" value="1"/>
</dbReference>
<dbReference type="SUPFAM" id="SSF143975">
    <property type="entry name" value="IlvD/EDD N-terminal domain-like"/>
    <property type="match status" value="1"/>
</dbReference>
<dbReference type="SUPFAM" id="SSF52016">
    <property type="entry name" value="LeuD/IlvD-like"/>
    <property type="match status" value="1"/>
</dbReference>
<dbReference type="PROSITE" id="PS00886">
    <property type="entry name" value="ILVD_EDD_1"/>
    <property type="match status" value="1"/>
</dbReference>
<dbReference type="PROSITE" id="PS00887">
    <property type="entry name" value="ILVD_EDD_2"/>
    <property type="match status" value="1"/>
</dbReference>
<sequence length="613" mass="65592">MPKYRSATTTHGRNMAGARALWRATGVKDEDFGKPIIAVVNSFTQFVPGHVHLKDLGQLVAREIEAAGGIAKEFNTIAVDDGIAMGHGGMLYSLPSRELIADSVEYMVNAHCADAMVCISNCDKITPGMLMASMRLNIPVIFVSGGPMEAGKTKLSDQIIKLDLVDAMIQGADPKVSDEQSEQIERSACPTCGSCSGMFTANSMNCLTEALGLSQPGNGSLLATHADRKQLFISAGQRIVELTKRYYEQDDESALPRNIATKAAFENAMALDIAMGGSTNTVLHLLAAAQEGEVDFDMTDIDRMSRMVPHLCKVAPSTQKYHMEDVHRAGGVVGILGELNRAGLLHNQSKTVLGLTWEEQLAQYDIMLTDSEEVKRFYRAGPAGIRTTQAFSQDCRWDTLDDDRAQGCIRTKENAFSQDGGLAVLKGNIALDGCIVKTAGVDESILKFTGPAVVFESQEDAVEGILGGKVKAGDVVVIRYEGPKGGPGMQEMLYPTTYLKSMGLGKACALLTDGRFSGGTSGLSIGHASPEAANGGAIGLVKQGDLIAIDIPNRTISLQVSDQEMAERRAEQDALGWKPVSRQREVSFALKAYASMATSADKGAVRDKSKLEG</sequence>
<feature type="chain" id="PRO_0000103528" description="Dihydroxy-acid dehydratase">
    <location>
        <begin position="1"/>
        <end position="613"/>
    </location>
</feature>
<feature type="active site" description="Proton acceptor" evidence="1">
    <location>
        <position position="517"/>
    </location>
</feature>
<feature type="binding site" evidence="1">
    <location>
        <position position="81"/>
    </location>
    <ligand>
        <name>Mg(2+)</name>
        <dbReference type="ChEBI" id="CHEBI:18420"/>
    </ligand>
</feature>
<feature type="binding site" evidence="1">
    <location>
        <position position="122"/>
    </location>
    <ligand>
        <name>[2Fe-2S] cluster</name>
        <dbReference type="ChEBI" id="CHEBI:190135"/>
    </ligand>
</feature>
<feature type="binding site" evidence="1">
    <location>
        <position position="123"/>
    </location>
    <ligand>
        <name>Mg(2+)</name>
        <dbReference type="ChEBI" id="CHEBI:18420"/>
    </ligand>
</feature>
<feature type="binding site" description="via carbamate group" evidence="1">
    <location>
        <position position="124"/>
    </location>
    <ligand>
        <name>Mg(2+)</name>
        <dbReference type="ChEBI" id="CHEBI:18420"/>
    </ligand>
</feature>
<feature type="binding site" evidence="1">
    <location>
        <position position="195"/>
    </location>
    <ligand>
        <name>[2Fe-2S] cluster</name>
        <dbReference type="ChEBI" id="CHEBI:190135"/>
    </ligand>
</feature>
<feature type="binding site" evidence="1">
    <location>
        <position position="491"/>
    </location>
    <ligand>
        <name>Mg(2+)</name>
        <dbReference type="ChEBI" id="CHEBI:18420"/>
    </ligand>
</feature>
<feature type="modified residue" description="N6-carboxylysine" evidence="1">
    <location>
        <position position="124"/>
    </location>
</feature>
<accession>Q8DDG1</accession>
<protein>
    <recommendedName>
        <fullName evidence="1">Dihydroxy-acid dehydratase</fullName>
        <shortName evidence="1">DAD</shortName>
        <ecNumber evidence="1">4.2.1.9</ecNumber>
    </recommendedName>
</protein>
<evidence type="ECO:0000255" key="1">
    <source>
        <dbReference type="HAMAP-Rule" id="MF_00012"/>
    </source>
</evidence>
<proteinExistence type="inferred from homology"/>
<organism>
    <name type="scientific">Vibrio vulnificus (strain CMCP6)</name>
    <dbReference type="NCBI Taxonomy" id="216895"/>
    <lineage>
        <taxon>Bacteria</taxon>
        <taxon>Pseudomonadati</taxon>
        <taxon>Pseudomonadota</taxon>
        <taxon>Gammaproteobacteria</taxon>
        <taxon>Vibrionales</taxon>
        <taxon>Vibrionaceae</taxon>
        <taxon>Vibrio</taxon>
    </lineage>
</organism>
<reference key="1">
    <citation type="submission" date="2002-12" db="EMBL/GenBank/DDBJ databases">
        <title>Complete genome sequence of Vibrio vulnificus CMCP6.</title>
        <authorList>
            <person name="Rhee J.H."/>
            <person name="Kim S.Y."/>
            <person name="Chung S.S."/>
            <person name="Kim J.J."/>
            <person name="Moon Y.H."/>
            <person name="Jeong H."/>
            <person name="Choy H.E."/>
        </authorList>
    </citation>
    <scope>NUCLEOTIDE SEQUENCE [LARGE SCALE GENOMIC DNA]</scope>
    <source>
        <strain>CMCP6</strain>
    </source>
</reference>
<comment type="function">
    <text evidence="1">Functions in the biosynthesis of branched-chain amino acids. Catalyzes the dehydration of (2R,3R)-2,3-dihydroxy-3-methylpentanoate (2,3-dihydroxy-3-methylvalerate) into 2-oxo-3-methylpentanoate (2-oxo-3-methylvalerate) and of (2R)-2,3-dihydroxy-3-methylbutanoate (2,3-dihydroxyisovalerate) into 2-oxo-3-methylbutanoate (2-oxoisovalerate), the penultimate precursor to L-isoleucine and L-valine, respectively.</text>
</comment>
<comment type="catalytic activity">
    <reaction evidence="1">
        <text>(2R)-2,3-dihydroxy-3-methylbutanoate = 3-methyl-2-oxobutanoate + H2O</text>
        <dbReference type="Rhea" id="RHEA:24809"/>
        <dbReference type="ChEBI" id="CHEBI:11851"/>
        <dbReference type="ChEBI" id="CHEBI:15377"/>
        <dbReference type="ChEBI" id="CHEBI:49072"/>
        <dbReference type="EC" id="4.2.1.9"/>
    </reaction>
    <physiologicalReaction direction="left-to-right" evidence="1">
        <dbReference type="Rhea" id="RHEA:24810"/>
    </physiologicalReaction>
</comment>
<comment type="catalytic activity">
    <reaction evidence="1">
        <text>(2R,3R)-2,3-dihydroxy-3-methylpentanoate = (S)-3-methyl-2-oxopentanoate + H2O</text>
        <dbReference type="Rhea" id="RHEA:27694"/>
        <dbReference type="ChEBI" id="CHEBI:15377"/>
        <dbReference type="ChEBI" id="CHEBI:35146"/>
        <dbReference type="ChEBI" id="CHEBI:49258"/>
        <dbReference type="EC" id="4.2.1.9"/>
    </reaction>
    <physiologicalReaction direction="left-to-right" evidence="1">
        <dbReference type="Rhea" id="RHEA:27695"/>
    </physiologicalReaction>
</comment>
<comment type="cofactor">
    <cofactor evidence="1">
        <name>[2Fe-2S] cluster</name>
        <dbReference type="ChEBI" id="CHEBI:190135"/>
    </cofactor>
    <text evidence="1">Binds 1 [2Fe-2S] cluster per subunit. This cluster acts as a Lewis acid cofactor.</text>
</comment>
<comment type="cofactor">
    <cofactor evidence="1">
        <name>Mg(2+)</name>
        <dbReference type="ChEBI" id="CHEBI:18420"/>
    </cofactor>
</comment>
<comment type="pathway">
    <text evidence="1">Amino-acid biosynthesis; L-isoleucine biosynthesis; L-isoleucine from 2-oxobutanoate: step 3/4.</text>
</comment>
<comment type="pathway">
    <text evidence="1">Amino-acid biosynthesis; L-valine biosynthesis; L-valine from pyruvate: step 3/4.</text>
</comment>
<comment type="subunit">
    <text evidence="1">Homodimer.</text>
</comment>
<comment type="similarity">
    <text evidence="1">Belongs to the IlvD/Edd family.</text>
</comment>
<name>ILVD_VIBVU</name>
<gene>
    <name evidence="1" type="primary">ilvD</name>
    <name type="ordered locus">VV1_1029</name>
</gene>
<keyword id="KW-0001">2Fe-2S</keyword>
<keyword id="KW-0028">Amino-acid biosynthesis</keyword>
<keyword id="KW-0100">Branched-chain amino acid biosynthesis</keyword>
<keyword id="KW-0408">Iron</keyword>
<keyword id="KW-0411">Iron-sulfur</keyword>
<keyword id="KW-0456">Lyase</keyword>
<keyword id="KW-0460">Magnesium</keyword>
<keyword id="KW-0479">Metal-binding</keyword>